<evidence type="ECO:0000255" key="1">
    <source>
        <dbReference type="HAMAP-Rule" id="MF_00213"/>
    </source>
</evidence>
<organism>
    <name type="scientific">Picosynechococcus sp. (strain ATCC 27264 / PCC 7002 / PR-6)</name>
    <name type="common">Agmenellum quadruplicatum</name>
    <dbReference type="NCBI Taxonomy" id="32049"/>
    <lineage>
        <taxon>Bacteria</taxon>
        <taxon>Bacillati</taxon>
        <taxon>Cyanobacteriota</taxon>
        <taxon>Cyanophyceae</taxon>
        <taxon>Oscillatoriophycideae</taxon>
        <taxon>Chroococcales</taxon>
        <taxon>Geminocystaceae</taxon>
        <taxon>Picosynechococcus</taxon>
    </lineage>
</organism>
<accession>Q8KX22</accession>
<accession>B1XM68</accession>
<protein>
    <recommendedName>
        <fullName evidence="1">Hydrogenase maturation factor HypA</fullName>
    </recommendedName>
</protein>
<gene>
    <name evidence="1" type="primary">hypA</name>
    <name type="ordered locus">SYNPCC7002_A0202</name>
</gene>
<keyword id="KW-0479">Metal-binding</keyword>
<keyword id="KW-0533">Nickel</keyword>
<keyword id="KW-1185">Reference proteome</keyword>
<keyword id="KW-0862">Zinc</keyword>
<feature type="chain" id="PRO_0000129051" description="Hydrogenase maturation factor HypA">
    <location>
        <begin position="1"/>
        <end position="113"/>
    </location>
</feature>
<feature type="binding site" evidence="1">
    <location>
        <position position="2"/>
    </location>
    <ligand>
        <name>Ni(2+)</name>
        <dbReference type="ChEBI" id="CHEBI:49786"/>
    </ligand>
</feature>
<feature type="binding site" evidence="1">
    <location>
        <position position="73"/>
    </location>
    <ligand>
        <name>Zn(2+)</name>
        <dbReference type="ChEBI" id="CHEBI:29105"/>
    </ligand>
</feature>
<feature type="binding site" evidence="1">
    <location>
        <position position="76"/>
    </location>
    <ligand>
        <name>Zn(2+)</name>
        <dbReference type="ChEBI" id="CHEBI:29105"/>
    </ligand>
</feature>
<feature type="binding site" evidence="1">
    <location>
        <position position="89"/>
    </location>
    <ligand>
        <name>Zn(2+)</name>
        <dbReference type="ChEBI" id="CHEBI:29105"/>
    </ligand>
</feature>
<feature type="binding site" evidence="1">
    <location>
        <position position="92"/>
    </location>
    <ligand>
        <name>Zn(2+)</name>
        <dbReference type="ChEBI" id="CHEBI:29105"/>
    </ligand>
</feature>
<sequence length="113" mass="12040">MHEVAIMTETVAIANAAAERQNATKIVGLTMRIGAISGVVPEALSFAFEAVAGGTLAEQAQLIIETVPVTCYCAQCDRPFTPPDLFYECPLCSSLSQHILSGKEVELKSLEVI</sequence>
<comment type="function">
    <text evidence="1">Involved in the maturation of [NiFe] hydrogenases. Required for nickel insertion into the metal center of the hydrogenase.</text>
</comment>
<comment type="similarity">
    <text evidence="1">Belongs to the HypA/HybF family.</text>
</comment>
<proteinExistence type="inferred from homology"/>
<name>HYPA_PICP2</name>
<reference key="1">
    <citation type="submission" date="2001-05" db="EMBL/GenBank/DDBJ databases">
        <title>An analysis of forty genes encoding electron transport proteins from Synechococcus sp. PCC 7002: a comparative study of electron transport proteins from cyanobacteria and chloroplasts.</title>
        <authorList>
            <person name="Nomura C.T."/>
            <person name="Persson S."/>
            <person name="Zhao J."/>
            <person name="Bryant D.A."/>
        </authorList>
    </citation>
    <scope>NUCLEOTIDE SEQUENCE [GENOMIC DNA]</scope>
</reference>
<reference key="2">
    <citation type="submission" date="2008-02" db="EMBL/GenBank/DDBJ databases">
        <title>Complete sequence of Synechococcus sp. PCC 7002.</title>
        <authorList>
            <person name="Li T."/>
            <person name="Zhao J."/>
            <person name="Zhao C."/>
            <person name="Liu Z."/>
            <person name="Zhao F."/>
            <person name="Marquardt J."/>
            <person name="Nomura C.T."/>
            <person name="Persson S."/>
            <person name="Detter J.C."/>
            <person name="Richardson P.M."/>
            <person name="Lanz C."/>
            <person name="Schuster S.C."/>
            <person name="Wang J."/>
            <person name="Li S."/>
            <person name="Huang X."/>
            <person name="Cai T."/>
            <person name="Yu Z."/>
            <person name="Luo J."/>
            <person name="Zhao J."/>
            <person name="Bryant D.A."/>
        </authorList>
    </citation>
    <scope>NUCLEOTIDE SEQUENCE [LARGE SCALE GENOMIC DNA]</scope>
    <source>
        <strain>ATCC 27264 / PCC 7002 / PR-6</strain>
    </source>
</reference>
<dbReference type="EMBL" id="AF381045">
    <property type="protein sequence ID" value="AAN03571.1"/>
    <property type="molecule type" value="Genomic_DNA"/>
</dbReference>
<dbReference type="EMBL" id="CP000951">
    <property type="protein sequence ID" value="ACA98215.1"/>
    <property type="molecule type" value="Genomic_DNA"/>
</dbReference>
<dbReference type="RefSeq" id="WP_012305839.1">
    <property type="nucleotide sequence ID" value="NZ_JAHHPU010000004.1"/>
</dbReference>
<dbReference type="SMR" id="Q8KX22"/>
<dbReference type="STRING" id="32049.SYNPCC7002_A0202"/>
<dbReference type="KEGG" id="syp:SYNPCC7002_A0202"/>
<dbReference type="eggNOG" id="COG0375">
    <property type="taxonomic scope" value="Bacteria"/>
</dbReference>
<dbReference type="HOGENOM" id="CLU_126929_4_1_3"/>
<dbReference type="Proteomes" id="UP000001688">
    <property type="component" value="Chromosome"/>
</dbReference>
<dbReference type="GO" id="GO:0016151">
    <property type="term" value="F:nickel cation binding"/>
    <property type="evidence" value="ECO:0007669"/>
    <property type="project" value="UniProtKB-UniRule"/>
</dbReference>
<dbReference type="GO" id="GO:0008270">
    <property type="term" value="F:zinc ion binding"/>
    <property type="evidence" value="ECO:0007669"/>
    <property type="project" value="UniProtKB-UniRule"/>
</dbReference>
<dbReference type="GO" id="GO:0051604">
    <property type="term" value="P:protein maturation"/>
    <property type="evidence" value="ECO:0007669"/>
    <property type="project" value="InterPro"/>
</dbReference>
<dbReference type="GO" id="GO:0036211">
    <property type="term" value="P:protein modification process"/>
    <property type="evidence" value="ECO:0007669"/>
    <property type="project" value="UniProtKB-UniRule"/>
</dbReference>
<dbReference type="Gene3D" id="3.30.2320.80">
    <property type="match status" value="1"/>
</dbReference>
<dbReference type="HAMAP" id="MF_00213">
    <property type="entry name" value="HypA_HybF"/>
    <property type="match status" value="1"/>
</dbReference>
<dbReference type="InterPro" id="IPR020538">
    <property type="entry name" value="Hydgase_Ni_incorp_HypA/HybF_CS"/>
</dbReference>
<dbReference type="InterPro" id="IPR000688">
    <property type="entry name" value="HypA/HybF"/>
</dbReference>
<dbReference type="NCBIfam" id="TIGR00100">
    <property type="entry name" value="hypA"/>
    <property type="match status" value="1"/>
</dbReference>
<dbReference type="PANTHER" id="PTHR34535">
    <property type="entry name" value="HYDROGENASE MATURATION FACTOR HYPA"/>
    <property type="match status" value="1"/>
</dbReference>
<dbReference type="PANTHER" id="PTHR34535:SF3">
    <property type="entry name" value="HYDROGENASE MATURATION FACTOR HYPA"/>
    <property type="match status" value="1"/>
</dbReference>
<dbReference type="Pfam" id="PF01155">
    <property type="entry name" value="HypA"/>
    <property type="match status" value="1"/>
</dbReference>
<dbReference type="PIRSF" id="PIRSF004761">
    <property type="entry name" value="Hydrgn_mat_HypA"/>
    <property type="match status" value="1"/>
</dbReference>
<dbReference type="PROSITE" id="PS01249">
    <property type="entry name" value="HYPA"/>
    <property type="match status" value="1"/>
</dbReference>